<sequence length="94" mass="10347">MNIKPLNDRVAVKYLEEEEKTRSGIVLPDTAKEEKPQQGEIVAVGKGCTPEDGDPEVKVGDLVVFDKYSGTKVTIDGEDYIILNLEDVLAVIEK</sequence>
<dbReference type="EMBL" id="CP001098">
    <property type="protein sequence ID" value="ACL68962.1"/>
    <property type="molecule type" value="Genomic_DNA"/>
</dbReference>
<dbReference type="RefSeq" id="WP_012635160.1">
    <property type="nucleotide sequence ID" value="NC_011899.1"/>
</dbReference>
<dbReference type="SMR" id="B8D0Z3"/>
<dbReference type="STRING" id="373903.Hore_02000"/>
<dbReference type="KEGG" id="hor:Hore_02000"/>
<dbReference type="eggNOG" id="COG0234">
    <property type="taxonomic scope" value="Bacteria"/>
</dbReference>
<dbReference type="HOGENOM" id="CLU_132825_2_0_9"/>
<dbReference type="OrthoDB" id="9806791at2"/>
<dbReference type="Proteomes" id="UP000000719">
    <property type="component" value="Chromosome"/>
</dbReference>
<dbReference type="GO" id="GO:0005737">
    <property type="term" value="C:cytoplasm"/>
    <property type="evidence" value="ECO:0007669"/>
    <property type="project" value="UniProtKB-SubCell"/>
</dbReference>
<dbReference type="GO" id="GO:0005524">
    <property type="term" value="F:ATP binding"/>
    <property type="evidence" value="ECO:0007669"/>
    <property type="project" value="InterPro"/>
</dbReference>
<dbReference type="GO" id="GO:0046872">
    <property type="term" value="F:metal ion binding"/>
    <property type="evidence" value="ECO:0007669"/>
    <property type="project" value="TreeGrafter"/>
</dbReference>
<dbReference type="GO" id="GO:0044183">
    <property type="term" value="F:protein folding chaperone"/>
    <property type="evidence" value="ECO:0007669"/>
    <property type="project" value="InterPro"/>
</dbReference>
<dbReference type="GO" id="GO:0051087">
    <property type="term" value="F:protein-folding chaperone binding"/>
    <property type="evidence" value="ECO:0007669"/>
    <property type="project" value="TreeGrafter"/>
</dbReference>
<dbReference type="GO" id="GO:0051082">
    <property type="term" value="F:unfolded protein binding"/>
    <property type="evidence" value="ECO:0007669"/>
    <property type="project" value="TreeGrafter"/>
</dbReference>
<dbReference type="GO" id="GO:0051085">
    <property type="term" value="P:chaperone cofactor-dependent protein refolding"/>
    <property type="evidence" value="ECO:0007669"/>
    <property type="project" value="TreeGrafter"/>
</dbReference>
<dbReference type="CDD" id="cd00320">
    <property type="entry name" value="cpn10"/>
    <property type="match status" value="1"/>
</dbReference>
<dbReference type="FunFam" id="2.30.33.40:FF:000001">
    <property type="entry name" value="10 kDa chaperonin"/>
    <property type="match status" value="1"/>
</dbReference>
<dbReference type="Gene3D" id="2.30.33.40">
    <property type="entry name" value="GroES chaperonin"/>
    <property type="match status" value="1"/>
</dbReference>
<dbReference type="HAMAP" id="MF_00580">
    <property type="entry name" value="CH10"/>
    <property type="match status" value="1"/>
</dbReference>
<dbReference type="InterPro" id="IPR020818">
    <property type="entry name" value="Chaperonin_GroES"/>
</dbReference>
<dbReference type="InterPro" id="IPR037124">
    <property type="entry name" value="Chaperonin_GroES_sf"/>
</dbReference>
<dbReference type="InterPro" id="IPR018369">
    <property type="entry name" value="Chaprnonin_Cpn10_CS"/>
</dbReference>
<dbReference type="InterPro" id="IPR011032">
    <property type="entry name" value="GroES-like_sf"/>
</dbReference>
<dbReference type="NCBIfam" id="NF001531">
    <property type="entry name" value="PRK00364.2-2"/>
    <property type="match status" value="1"/>
</dbReference>
<dbReference type="NCBIfam" id="NF001533">
    <property type="entry name" value="PRK00364.2-4"/>
    <property type="match status" value="1"/>
</dbReference>
<dbReference type="PANTHER" id="PTHR10772">
    <property type="entry name" value="10 KDA HEAT SHOCK PROTEIN"/>
    <property type="match status" value="1"/>
</dbReference>
<dbReference type="PANTHER" id="PTHR10772:SF63">
    <property type="entry name" value="20 KDA CHAPERONIN, CHLOROPLASTIC"/>
    <property type="match status" value="1"/>
</dbReference>
<dbReference type="Pfam" id="PF00166">
    <property type="entry name" value="Cpn10"/>
    <property type="match status" value="1"/>
</dbReference>
<dbReference type="PRINTS" id="PR00297">
    <property type="entry name" value="CHAPERONIN10"/>
</dbReference>
<dbReference type="SMART" id="SM00883">
    <property type="entry name" value="Cpn10"/>
    <property type="match status" value="1"/>
</dbReference>
<dbReference type="SUPFAM" id="SSF50129">
    <property type="entry name" value="GroES-like"/>
    <property type="match status" value="1"/>
</dbReference>
<dbReference type="PROSITE" id="PS00681">
    <property type="entry name" value="CHAPERONINS_CPN10"/>
    <property type="match status" value="1"/>
</dbReference>
<comment type="function">
    <text evidence="1">Together with the chaperonin GroEL, plays an essential role in assisting protein folding. The GroEL-GroES system forms a nano-cage that allows encapsulation of the non-native substrate proteins and provides a physical environment optimized to promote and accelerate protein folding. GroES binds to the apical surface of the GroEL ring, thereby capping the opening of the GroEL channel.</text>
</comment>
<comment type="subunit">
    <text evidence="1">Heptamer of 7 subunits arranged in a ring. Interacts with the chaperonin GroEL.</text>
</comment>
<comment type="subcellular location">
    <subcellularLocation>
        <location evidence="1">Cytoplasm</location>
    </subcellularLocation>
</comment>
<comment type="similarity">
    <text evidence="1">Belongs to the GroES chaperonin family.</text>
</comment>
<evidence type="ECO:0000255" key="1">
    <source>
        <dbReference type="HAMAP-Rule" id="MF_00580"/>
    </source>
</evidence>
<feature type="chain" id="PRO_1000212118" description="Co-chaperonin GroES">
    <location>
        <begin position="1"/>
        <end position="94"/>
    </location>
</feature>
<keyword id="KW-0143">Chaperone</keyword>
<keyword id="KW-0963">Cytoplasm</keyword>
<keyword id="KW-1185">Reference proteome</keyword>
<proteinExistence type="inferred from homology"/>
<accession>B8D0Z3</accession>
<name>CH10_HALOH</name>
<organism>
    <name type="scientific">Halothermothrix orenii (strain H 168 / OCM 544 / DSM 9562)</name>
    <dbReference type="NCBI Taxonomy" id="373903"/>
    <lineage>
        <taxon>Bacteria</taxon>
        <taxon>Bacillati</taxon>
        <taxon>Bacillota</taxon>
        <taxon>Clostridia</taxon>
        <taxon>Halanaerobiales</taxon>
        <taxon>Halothermotrichaceae</taxon>
        <taxon>Halothermothrix</taxon>
    </lineage>
</organism>
<gene>
    <name evidence="1" type="primary">groES</name>
    <name evidence="1" type="synonym">groS</name>
    <name type="ordered locus">Hore_02000</name>
</gene>
<protein>
    <recommendedName>
        <fullName evidence="1">Co-chaperonin GroES</fullName>
    </recommendedName>
    <alternativeName>
        <fullName evidence="1">10 kDa chaperonin</fullName>
    </alternativeName>
    <alternativeName>
        <fullName evidence="1">Chaperonin-10</fullName>
        <shortName evidence="1">Cpn10</shortName>
    </alternativeName>
</protein>
<reference key="1">
    <citation type="journal article" date="2009" name="PLoS ONE">
        <title>Genome analysis of the anaerobic thermohalophilic bacterium Halothermothrix orenii.</title>
        <authorList>
            <person name="Mavromatis K."/>
            <person name="Ivanova N."/>
            <person name="Anderson I."/>
            <person name="Lykidis A."/>
            <person name="Hooper S.D."/>
            <person name="Sun H."/>
            <person name="Kunin V."/>
            <person name="Lapidus A."/>
            <person name="Hugenholtz P."/>
            <person name="Patel B."/>
            <person name="Kyrpides N.C."/>
        </authorList>
    </citation>
    <scope>NUCLEOTIDE SEQUENCE [LARGE SCALE GENOMIC DNA]</scope>
    <source>
        <strain>H 168 / OCM 544 / DSM 9562</strain>
    </source>
</reference>